<protein>
    <recommendedName>
        <fullName>ATP-dependent RNA helicase MAK5</fullName>
        <ecNumber>3.6.4.13</ecNumber>
    </recommendedName>
</protein>
<dbReference type="EC" id="3.6.4.13"/>
<dbReference type="EMBL" id="CR380947">
    <property type="protein sequence ID" value="CAG57819.1"/>
    <property type="molecule type" value="Genomic_DNA"/>
</dbReference>
<dbReference type="RefSeq" id="XP_444926.1">
    <property type="nucleotide sequence ID" value="XM_444926.1"/>
</dbReference>
<dbReference type="SMR" id="Q6FY67"/>
<dbReference type="FunCoup" id="Q6FY67">
    <property type="interactions" value="1028"/>
</dbReference>
<dbReference type="STRING" id="284593.Q6FY67"/>
<dbReference type="EnsemblFungi" id="CAGL0A03652g-T">
    <property type="protein sequence ID" value="CAGL0A03652g-T-p1"/>
    <property type="gene ID" value="CAGL0A03652g"/>
</dbReference>
<dbReference type="KEGG" id="cgr:2886320"/>
<dbReference type="CGD" id="CAL0126771">
    <property type="gene designation" value="CAGL0A03652g"/>
</dbReference>
<dbReference type="VEuPathDB" id="FungiDB:B1J91_A03652g"/>
<dbReference type="VEuPathDB" id="FungiDB:CAGL0A03652g"/>
<dbReference type="eggNOG" id="KOG0347">
    <property type="taxonomic scope" value="Eukaryota"/>
</dbReference>
<dbReference type="HOGENOM" id="CLU_003041_13_0_1"/>
<dbReference type="InParanoid" id="Q6FY67"/>
<dbReference type="OMA" id="QMIQKAR"/>
<dbReference type="Proteomes" id="UP000002428">
    <property type="component" value="Chromosome A"/>
</dbReference>
<dbReference type="GO" id="GO:0005829">
    <property type="term" value="C:cytosol"/>
    <property type="evidence" value="ECO:0007669"/>
    <property type="project" value="TreeGrafter"/>
</dbReference>
<dbReference type="GO" id="GO:0005730">
    <property type="term" value="C:nucleolus"/>
    <property type="evidence" value="ECO:0007669"/>
    <property type="project" value="UniProtKB-SubCell"/>
</dbReference>
<dbReference type="GO" id="GO:0005524">
    <property type="term" value="F:ATP binding"/>
    <property type="evidence" value="ECO:0007669"/>
    <property type="project" value="UniProtKB-KW"/>
</dbReference>
<dbReference type="GO" id="GO:0016887">
    <property type="term" value="F:ATP hydrolysis activity"/>
    <property type="evidence" value="ECO:0007669"/>
    <property type="project" value="RHEA"/>
</dbReference>
<dbReference type="GO" id="GO:0003723">
    <property type="term" value="F:RNA binding"/>
    <property type="evidence" value="ECO:0007669"/>
    <property type="project" value="UniProtKB-KW"/>
</dbReference>
<dbReference type="GO" id="GO:0003724">
    <property type="term" value="F:RNA helicase activity"/>
    <property type="evidence" value="ECO:0007669"/>
    <property type="project" value="UniProtKB-EC"/>
</dbReference>
<dbReference type="GO" id="GO:0000466">
    <property type="term" value="P:maturation of 5.8S rRNA from tricistronic rRNA transcript (SSU-rRNA, 5.8S rRNA, LSU-rRNA)"/>
    <property type="evidence" value="ECO:0007669"/>
    <property type="project" value="EnsemblFungi"/>
</dbReference>
<dbReference type="GO" id="GO:0000463">
    <property type="term" value="P:maturation of LSU-rRNA from tricistronic rRNA transcript (SSU-rRNA, 5.8S rRNA, LSU-rRNA)"/>
    <property type="evidence" value="ECO:0007669"/>
    <property type="project" value="EnsemblFungi"/>
</dbReference>
<dbReference type="CDD" id="cd17946">
    <property type="entry name" value="DEADc_DDX24"/>
    <property type="match status" value="1"/>
</dbReference>
<dbReference type="CDD" id="cd18787">
    <property type="entry name" value="SF2_C_DEAD"/>
    <property type="match status" value="1"/>
</dbReference>
<dbReference type="Gene3D" id="3.40.50.300">
    <property type="entry name" value="P-loop containing nucleotide triphosphate hydrolases"/>
    <property type="match status" value="2"/>
</dbReference>
<dbReference type="InterPro" id="IPR011545">
    <property type="entry name" value="DEAD/DEAH_box_helicase_dom"/>
</dbReference>
<dbReference type="InterPro" id="IPR050079">
    <property type="entry name" value="DEAD_box_RNA_helicase"/>
</dbReference>
<dbReference type="InterPro" id="IPR014001">
    <property type="entry name" value="Helicase_ATP-bd"/>
</dbReference>
<dbReference type="InterPro" id="IPR001650">
    <property type="entry name" value="Helicase_C-like"/>
</dbReference>
<dbReference type="InterPro" id="IPR027417">
    <property type="entry name" value="P-loop_NTPase"/>
</dbReference>
<dbReference type="InterPro" id="IPR000629">
    <property type="entry name" value="RNA-helicase_DEAD-box_CS"/>
</dbReference>
<dbReference type="PANTHER" id="PTHR47959:SF1">
    <property type="entry name" value="ATP-DEPENDENT RNA HELICASE DBPA"/>
    <property type="match status" value="1"/>
</dbReference>
<dbReference type="PANTHER" id="PTHR47959">
    <property type="entry name" value="ATP-DEPENDENT RNA HELICASE RHLE-RELATED"/>
    <property type="match status" value="1"/>
</dbReference>
<dbReference type="Pfam" id="PF00270">
    <property type="entry name" value="DEAD"/>
    <property type="match status" value="1"/>
</dbReference>
<dbReference type="Pfam" id="PF00271">
    <property type="entry name" value="Helicase_C"/>
    <property type="match status" value="1"/>
</dbReference>
<dbReference type="SMART" id="SM00487">
    <property type="entry name" value="DEXDc"/>
    <property type="match status" value="1"/>
</dbReference>
<dbReference type="SMART" id="SM00490">
    <property type="entry name" value="HELICc"/>
    <property type="match status" value="1"/>
</dbReference>
<dbReference type="SUPFAM" id="SSF52540">
    <property type="entry name" value="P-loop containing nucleoside triphosphate hydrolases"/>
    <property type="match status" value="1"/>
</dbReference>
<dbReference type="PROSITE" id="PS00039">
    <property type="entry name" value="DEAD_ATP_HELICASE"/>
    <property type="match status" value="1"/>
</dbReference>
<dbReference type="PROSITE" id="PS51192">
    <property type="entry name" value="HELICASE_ATP_BIND_1"/>
    <property type="match status" value="1"/>
</dbReference>
<dbReference type="PROSITE" id="PS51194">
    <property type="entry name" value="HELICASE_CTER"/>
    <property type="match status" value="1"/>
</dbReference>
<dbReference type="PROSITE" id="PS51195">
    <property type="entry name" value="Q_MOTIF"/>
    <property type="match status" value="1"/>
</dbReference>
<evidence type="ECO:0000250" key="1"/>
<evidence type="ECO:0000255" key="2">
    <source>
        <dbReference type="PROSITE-ProRule" id="PRU00541"/>
    </source>
</evidence>
<evidence type="ECO:0000255" key="3">
    <source>
        <dbReference type="PROSITE-ProRule" id="PRU00542"/>
    </source>
</evidence>
<evidence type="ECO:0000256" key="4">
    <source>
        <dbReference type="SAM" id="MobiDB-lite"/>
    </source>
</evidence>
<evidence type="ECO:0000305" key="5"/>
<gene>
    <name type="primary">MAK5</name>
    <name type="ordered locus">CAGL0A03652g</name>
</gene>
<comment type="function">
    <text evidence="1">ATP-binding RNA helicase involved in the biogenesis of 60S ribosomal subunits and is required for the normal formation of 25S and 5.8S rRNAs.</text>
</comment>
<comment type="catalytic activity">
    <reaction>
        <text>ATP + H2O = ADP + phosphate + H(+)</text>
        <dbReference type="Rhea" id="RHEA:13065"/>
        <dbReference type="ChEBI" id="CHEBI:15377"/>
        <dbReference type="ChEBI" id="CHEBI:15378"/>
        <dbReference type="ChEBI" id="CHEBI:30616"/>
        <dbReference type="ChEBI" id="CHEBI:43474"/>
        <dbReference type="ChEBI" id="CHEBI:456216"/>
        <dbReference type="EC" id="3.6.4.13"/>
    </reaction>
</comment>
<comment type="subcellular location">
    <subcellularLocation>
        <location evidence="1">Nucleus</location>
        <location evidence="1">Nucleolus</location>
    </subcellularLocation>
</comment>
<comment type="domain">
    <text>The Q motif is unique to and characteristic of the DEAD box family of RNA helicases and controls ATP binding and hydrolysis.</text>
</comment>
<comment type="similarity">
    <text evidence="5">Belongs to the DEAD box helicase family. DDX24/MAK5 subfamily.</text>
</comment>
<proteinExistence type="inferred from homology"/>
<keyword id="KW-0067">ATP-binding</keyword>
<keyword id="KW-0347">Helicase</keyword>
<keyword id="KW-0378">Hydrolase</keyword>
<keyword id="KW-0547">Nucleotide-binding</keyword>
<keyword id="KW-0539">Nucleus</keyword>
<keyword id="KW-1185">Reference proteome</keyword>
<keyword id="KW-0690">Ribosome biogenesis</keyword>
<keyword id="KW-0694">RNA-binding</keyword>
<keyword id="KW-0698">rRNA processing</keyword>
<sequence>MGKRVVATDKELKWKKVDIPDTLDDFGGFYGLEEIDGVDVKVVNGQVQFIASEAQVKEEEESSESDFPDFDAMEQEDDGDVEEAEEEEEEEEDVAEADEPEVKQKQEQARVEQIDKGVDSEKHEDEKETPEDDLATNVFDIDVDLSDVGSGELPGWTDTVDLSMTTINGLSNLGFTEMTPIQKLSIPAALEGKDIMGKASTGSGKTLAYGIPIIEKMIKSKDNLRTNGIIFTPTRELAQQVTKHLQNVCSMLLKKNPYMILSLTGGLSIQKQERLLKYDGSARIVVATPGRFLELIEKNEELMKRFAKIDVLVLDEADRLLQDGHFDEFEKILKHLGRIRKSLKNMEYWQTLIYSATFSTDLFDKLANSSWKKKNNSKDESEMESVLKHLMTKINFKSKPMMIDANPEDKISAQIKESLIECAPLERDLYCYYFVTLYPGTTLIFCNSIESVKKLNAYLINLGINSFQIHSSMTQKNRLKNLEKFEAMASKNNHLGKPTVLIASDVAARGLDIKGIKHVVHYHLPHSADTYIHRSGRTARGDNEGVAVMICSPQEAMGPLRKLRRLLASKEQISKSTKNKKWQQTVPLLPIEIDILQQLRERSSLANDIAEHELASRSLRKDSNWLKQAADELGIDMDSDEEDKDIILAKNKNKKMNKTLDKNELKSMKAELTHLLKIPIRKDMRRSYLTGGLVNLADSLVKKRGHHNIIGHEKTDALNVLKKGKSNKKQKTK</sequence>
<reference key="1">
    <citation type="journal article" date="2004" name="Nature">
        <title>Genome evolution in yeasts.</title>
        <authorList>
            <person name="Dujon B."/>
            <person name="Sherman D."/>
            <person name="Fischer G."/>
            <person name="Durrens P."/>
            <person name="Casaregola S."/>
            <person name="Lafontaine I."/>
            <person name="de Montigny J."/>
            <person name="Marck C."/>
            <person name="Neuveglise C."/>
            <person name="Talla E."/>
            <person name="Goffard N."/>
            <person name="Frangeul L."/>
            <person name="Aigle M."/>
            <person name="Anthouard V."/>
            <person name="Babour A."/>
            <person name="Barbe V."/>
            <person name="Barnay S."/>
            <person name="Blanchin S."/>
            <person name="Beckerich J.-M."/>
            <person name="Beyne E."/>
            <person name="Bleykasten C."/>
            <person name="Boisrame A."/>
            <person name="Boyer J."/>
            <person name="Cattolico L."/>
            <person name="Confanioleri F."/>
            <person name="de Daruvar A."/>
            <person name="Despons L."/>
            <person name="Fabre E."/>
            <person name="Fairhead C."/>
            <person name="Ferry-Dumazet H."/>
            <person name="Groppi A."/>
            <person name="Hantraye F."/>
            <person name="Hennequin C."/>
            <person name="Jauniaux N."/>
            <person name="Joyet P."/>
            <person name="Kachouri R."/>
            <person name="Kerrest A."/>
            <person name="Koszul R."/>
            <person name="Lemaire M."/>
            <person name="Lesur I."/>
            <person name="Ma L."/>
            <person name="Muller H."/>
            <person name="Nicaud J.-M."/>
            <person name="Nikolski M."/>
            <person name="Oztas S."/>
            <person name="Ozier-Kalogeropoulos O."/>
            <person name="Pellenz S."/>
            <person name="Potier S."/>
            <person name="Richard G.-F."/>
            <person name="Straub M.-L."/>
            <person name="Suleau A."/>
            <person name="Swennen D."/>
            <person name="Tekaia F."/>
            <person name="Wesolowski-Louvel M."/>
            <person name="Westhof E."/>
            <person name="Wirth B."/>
            <person name="Zeniou-Meyer M."/>
            <person name="Zivanovic Y."/>
            <person name="Bolotin-Fukuhara M."/>
            <person name="Thierry A."/>
            <person name="Bouchier C."/>
            <person name="Caudron B."/>
            <person name="Scarpelli C."/>
            <person name="Gaillardin C."/>
            <person name="Weissenbach J."/>
            <person name="Wincker P."/>
            <person name="Souciet J.-L."/>
        </authorList>
    </citation>
    <scope>NUCLEOTIDE SEQUENCE [LARGE SCALE GENOMIC DNA]</scope>
    <source>
        <strain>ATCC 2001 / BCRC 20586 / JCM 3761 / NBRC 0622 / NRRL Y-65 / CBS 138</strain>
    </source>
</reference>
<organism>
    <name type="scientific">Candida glabrata (strain ATCC 2001 / BCRC 20586 / JCM 3761 / NBRC 0622 / NRRL Y-65 / CBS 138)</name>
    <name type="common">Yeast</name>
    <name type="synonym">Nakaseomyces glabratus</name>
    <dbReference type="NCBI Taxonomy" id="284593"/>
    <lineage>
        <taxon>Eukaryota</taxon>
        <taxon>Fungi</taxon>
        <taxon>Dikarya</taxon>
        <taxon>Ascomycota</taxon>
        <taxon>Saccharomycotina</taxon>
        <taxon>Saccharomycetes</taxon>
        <taxon>Saccharomycetales</taxon>
        <taxon>Saccharomycetaceae</taxon>
        <taxon>Nakaseomyces</taxon>
    </lineage>
</organism>
<accession>Q6FY67</accession>
<feature type="chain" id="PRO_0000232232" description="ATP-dependent RNA helicase MAK5">
    <location>
        <begin position="1"/>
        <end position="733"/>
    </location>
</feature>
<feature type="domain" description="Helicase ATP-binding" evidence="2">
    <location>
        <begin position="186"/>
        <end position="376"/>
    </location>
</feature>
<feature type="domain" description="Helicase C-terminal" evidence="3">
    <location>
        <begin position="428"/>
        <end position="594"/>
    </location>
</feature>
<feature type="region of interest" description="Disordered" evidence="4">
    <location>
        <begin position="53"/>
        <end position="132"/>
    </location>
</feature>
<feature type="short sequence motif" description="Q motif">
    <location>
        <begin position="155"/>
        <end position="183"/>
    </location>
</feature>
<feature type="short sequence motif" description="DEAD box">
    <location>
        <begin position="315"/>
        <end position="318"/>
    </location>
</feature>
<feature type="compositionally biased region" description="Acidic residues" evidence="4">
    <location>
        <begin position="58"/>
        <end position="99"/>
    </location>
</feature>
<feature type="compositionally biased region" description="Basic and acidic residues" evidence="4">
    <location>
        <begin position="100"/>
        <end position="126"/>
    </location>
</feature>
<feature type="binding site" evidence="2">
    <location>
        <begin position="199"/>
        <end position="206"/>
    </location>
    <ligand>
        <name>ATP</name>
        <dbReference type="ChEBI" id="CHEBI:30616"/>
    </ligand>
</feature>
<name>MAK5_CANGA</name>